<evidence type="ECO:0000255" key="1">
    <source>
        <dbReference type="HAMAP-Rule" id="MF_00248"/>
    </source>
</evidence>
<proteinExistence type="inferred from homology"/>
<feature type="chain" id="PRO_0000336773" description="ATP-dependent protease subunit HslV">
    <location>
        <begin position="1"/>
        <end position="180"/>
    </location>
</feature>
<feature type="active site" evidence="1">
    <location>
        <position position="7"/>
    </location>
</feature>
<feature type="binding site" evidence="1">
    <location>
        <position position="162"/>
    </location>
    <ligand>
        <name>Na(+)</name>
        <dbReference type="ChEBI" id="CHEBI:29101"/>
    </ligand>
</feature>
<feature type="binding site" evidence="1">
    <location>
        <position position="165"/>
    </location>
    <ligand>
        <name>Na(+)</name>
        <dbReference type="ChEBI" id="CHEBI:29101"/>
    </ligand>
</feature>
<feature type="binding site" evidence="1">
    <location>
        <position position="168"/>
    </location>
    <ligand>
        <name>Na(+)</name>
        <dbReference type="ChEBI" id="CHEBI:29101"/>
    </ligand>
</feature>
<sequence>MFDAHSTTILSVRRGNHVAIAGDGQVSLGQTIMKGNARKIRRLYHDQILAGFAGATADAFTLFELFEGKLEAQDGQLLRAAVEMAKEWRTDRSLRRLEAMLIVADRNNTLILSGNGDIVEPENSLAAIGSGGMYALAAARALYHNTEMDALSIAEKSLNIAADICIYTNHNIVSDELKDA</sequence>
<accession>A5EX24</accession>
<organism>
    <name type="scientific">Dichelobacter nodosus (strain VCS1703A)</name>
    <dbReference type="NCBI Taxonomy" id="246195"/>
    <lineage>
        <taxon>Bacteria</taxon>
        <taxon>Pseudomonadati</taxon>
        <taxon>Pseudomonadota</taxon>
        <taxon>Gammaproteobacteria</taxon>
        <taxon>Cardiobacteriales</taxon>
        <taxon>Cardiobacteriaceae</taxon>
        <taxon>Dichelobacter</taxon>
    </lineage>
</organism>
<dbReference type="EC" id="3.4.25.2" evidence="1"/>
<dbReference type="EMBL" id="CP000513">
    <property type="protein sequence ID" value="ABQ13725.1"/>
    <property type="molecule type" value="Genomic_DNA"/>
</dbReference>
<dbReference type="RefSeq" id="WP_012031630.1">
    <property type="nucleotide sequence ID" value="NC_009446.1"/>
</dbReference>
<dbReference type="SMR" id="A5EX24"/>
<dbReference type="STRING" id="246195.DNO_1346"/>
<dbReference type="MEROPS" id="T01.006"/>
<dbReference type="KEGG" id="dno:DNO_1346"/>
<dbReference type="eggNOG" id="COG5405">
    <property type="taxonomic scope" value="Bacteria"/>
</dbReference>
<dbReference type="HOGENOM" id="CLU_093872_1_0_6"/>
<dbReference type="OrthoDB" id="9804884at2"/>
<dbReference type="Proteomes" id="UP000000248">
    <property type="component" value="Chromosome"/>
</dbReference>
<dbReference type="GO" id="GO:0009376">
    <property type="term" value="C:HslUV protease complex"/>
    <property type="evidence" value="ECO:0007669"/>
    <property type="project" value="UniProtKB-UniRule"/>
</dbReference>
<dbReference type="GO" id="GO:0005839">
    <property type="term" value="C:proteasome core complex"/>
    <property type="evidence" value="ECO:0007669"/>
    <property type="project" value="InterPro"/>
</dbReference>
<dbReference type="GO" id="GO:0046872">
    <property type="term" value="F:metal ion binding"/>
    <property type="evidence" value="ECO:0007669"/>
    <property type="project" value="UniProtKB-KW"/>
</dbReference>
<dbReference type="GO" id="GO:0004298">
    <property type="term" value="F:threonine-type endopeptidase activity"/>
    <property type="evidence" value="ECO:0007669"/>
    <property type="project" value="UniProtKB-KW"/>
</dbReference>
<dbReference type="GO" id="GO:0051603">
    <property type="term" value="P:proteolysis involved in protein catabolic process"/>
    <property type="evidence" value="ECO:0007669"/>
    <property type="project" value="InterPro"/>
</dbReference>
<dbReference type="CDD" id="cd01913">
    <property type="entry name" value="protease_HslV"/>
    <property type="match status" value="1"/>
</dbReference>
<dbReference type="FunFam" id="3.60.20.10:FF:000002">
    <property type="entry name" value="ATP-dependent protease subunit HslV"/>
    <property type="match status" value="1"/>
</dbReference>
<dbReference type="Gene3D" id="3.60.20.10">
    <property type="entry name" value="Glutamine Phosphoribosylpyrophosphate, subunit 1, domain 1"/>
    <property type="match status" value="1"/>
</dbReference>
<dbReference type="HAMAP" id="MF_00248">
    <property type="entry name" value="HslV"/>
    <property type="match status" value="1"/>
</dbReference>
<dbReference type="InterPro" id="IPR022281">
    <property type="entry name" value="ATP-dep_Prtase_HsIV_su"/>
</dbReference>
<dbReference type="InterPro" id="IPR029055">
    <property type="entry name" value="Ntn_hydrolases_N"/>
</dbReference>
<dbReference type="InterPro" id="IPR001353">
    <property type="entry name" value="Proteasome_sua/b"/>
</dbReference>
<dbReference type="InterPro" id="IPR023333">
    <property type="entry name" value="Proteasome_suB-type"/>
</dbReference>
<dbReference type="NCBIfam" id="TIGR03692">
    <property type="entry name" value="ATP_dep_HslV"/>
    <property type="match status" value="1"/>
</dbReference>
<dbReference type="NCBIfam" id="NF003964">
    <property type="entry name" value="PRK05456.1"/>
    <property type="match status" value="1"/>
</dbReference>
<dbReference type="PANTHER" id="PTHR32194:SF0">
    <property type="entry name" value="ATP-DEPENDENT PROTEASE SUBUNIT HSLV"/>
    <property type="match status" value="1"/>
</dbReference>
<dbReference type="PANTHER" id="PTHR32194">
    <property type="entry name" value="METALLOPROTEASE TLDD"/>
    <property type="match status" value="1"/>
</dbReference>
<dbReference type="Pfam" id="PF00227">
    <property type="entry name" value="Proteasome"/>
    <property type="match status" value="1"/>
</dbReference>
<dbReference type="PIRSF" id="PIRSF039093">
    <property type="entry name" value="HslV"/>
    <property type="match status" value="1"/>
</dbReference>
<dbReference type="SUPFAM" id="SSF56235">
    <property type="entry name" value="N-terminal nucleophile aminohydrolases (Ntn hydrolases)"/>
    <property type="match status" value="1"/>
</dbReference>
<dbReference type="PROSITE" id="PS51476">
    <property type="entry name" value="PROTEASOME_BETA_2"/>
    <property type="match status" value="1"/>
</dbReference>
<name>HSLV_DICNV</name>
<keyword id="KW-0021">Allosteric enzyme</keyword>
<keyword id="KW-0963">Cytoplasm</keyword>
<keyword id="KW-0378">Hydrolase</keyword>
<keyword id="KW-0479">Metal-binding</keyword>
<keyword id="KW-0645">Protease</keyword>
<keyword id="KW-1185">Reference proteome</keyword>
<keyword id="KW-0915">Sodium</keyword>
<keyword id="KW-0346">Stress response</keyword>
<keyword id="KW-0888">Threonine protease</keyword>
<gene>
    <name evidence="1" type="primary">hslV</name>
    <name type="ordered locus">DNO_1346</name>
</gene>
<reference key="1">
    <citation type="journal article" date="2007" name="Nat. Biotechnol.">
        <title>Genome sequence and identification of candidate vaccine antigens from the animal pathogen Dichelobacter nodosus.</title>
        <authorList>
            <person name="Myers G.S.A."/>
            <person name="Parker D."/>
            <person name="Al-Hasani K."/>
            <person name="Kennan R.M."/>
            <person name="Seemann T."/>
            <person name="Ren Q."/>
            <person name="Badger J.H."/>
            <person name="Selengut J.D."/>
            <person name="Deboy R.T."/>
            <person name="Tettelin H."/>
            <person name="Boyce J.D."/>
            <person name="McCarl V.P."/>
            <person name="Han X."/>
            <person name="Nelson W.C."/>
            <person name="Madupu R."/>
            <person name="Mohamoud Y."/>
            <person name="Holley T."/>
            <person name="Fedorova N."/>
            <person name="Khouri H."/>
            <person name="Bottomley S.P."/>
            <person name="Whittington R.J."/>
            <person name="Adler B."/>
            <person name="Songer J.G."/>
            <person name="Rood J.I."/>
            <person name="Paulsen I.T."/>
        </authorList>
    </citation>
    <scope>NUCLEOTIDE SEQUENCE [LARGE SCALE GENOMIC DNA]</scope>
    <source>
        <strain>VCS1703A</strain>
    </source>
</reference>
<protein>
    <recommendedName>
        <fullName evidence="1">ATP-dependent protease subunit HslV</fullName>
        <ecNumber evidence="1">3.4.25.2</ecNumber>
    </recommendedName>
</protein>
<comment type="function">
    <text evidence="1">Protease subunit of a proteasome-like degradation complex believed to be a general protein degrading machinery.</text>
</comment>
<comment type="catalytic activity">
    <reaction evidence="1">
        <text>ATP-dependent cleavage of peptide bonds with broad specificity.</text>
        <dbReference type="EC" id="3.4.25.2"/>
    </reaction>
</comment>
<comment type="activity regulation">
    <text evidence="1">Allosterically activated by HslU binding.</text>
</comment>
<comment type="subunit">
    <text evidence="1">A double ring-shaped homohexamer of HslV is capped on each side by a ring-shaped HslU homohexamer. The assembly of the HslU/HslV complex is dependent on binding of ATP.</text>
</comment>
<comment type="subcellular location">
    <subcellularLocation>
        <location evidence="1">Cytoplasm</location>
    </subcellularLocation>
</comment>
<comment type="similarity">
    <text evidence="1">Belongs to the peptidase T1B family. HslV subfamily.</text>
</comment>